<sequence length="237" mass="26294">MKGSEYALLVARETLAEHYKEVEAFQTARAKSARRLSKVIAAVATIAVLGNVAQAFTIATMVPLIRLVPVYLWIRPDGTVDSEVSVSRLPATQEEAVVNASLWEYVRLRESYDADTAQYAYDLVSNFSAPMVRQNYQQFFNYPNPTSPQVILGKHGRLEVEHIASNDVTPGVQQIRYKRTLIVDGKMPMASTWTATVRYEKVTSLPGRLRLTNPGGLVVTSYQTSEDTVSNAGHSEP</sequence>
<name>VIRB8_AGRFC</name>
<organism>
    <name type="scientific">Agrobacterium fabrum (strain C58 / ATCC 33970)</name>
    <name type="common">Agrobacterium tumefaciens (strain C58)</name>
    <dbReference type="NCBI Taxonomy" id="176299"/>
    <lineage>
        <taxon>Bacteria</taxon>
        <taxon>Pseudomonadati</taxon>
        <taxon>Pseudomonadota</taxon>
        <taxon>Alphaproteobacteria</taxon>
        <taxon>Hyphomicrobiales</taxon>
        <taxon>Rhizobiaceae</taxon>
        <taxon>Rhizobium/Agrobacterium group</taxon>
        <taxon>Agrobacterium</taxon>
        <taxon>Agrobacterium tumefaciens complex</taxon>
    </lineage>
</organism>
<gene>
    <name type="primary">virB8</name>
    <name type="ordered locus">Atu6174</name>
    <name type="ORF">AGR_pTi_11</name>
</gene>
<proteinExistence type="evidence at protein level"/>
<reference key="1">
    <citation type="journal article" date="1990" name="Mol. Gen. Genet.">
        <title>The virB operon of Agrobacterium tumefaciens pTiC58 encodes 11 open reading frames.</title>
        <authorList>
            <person name="Kuldau G.A."/>
            <person name="de Vos G."/>
            <person name="Owen J."/>
            <person name="McCaffrey G."/>
            <person name="Zambryski P."/>
        </authorList>
    </citation>
    <scope>NUCLEOTIDE SEQUENCE [GENOMIC DNA]</scope>
</reference>
<reference key="2">
    <citation type="journal article" date="1990" name="Plasmid">
        <title>Molecular characterization of the vir regulon of Agrobacterium tumefaciens: complete nucleotide sequence and gene organization of the 28.63-kbp regulon cloned as a single unit.</title>
        <authorList>
            <person name="Rogowsky P.M."/>
            <person name="Powell B.S."/>
            <person name="Shirasu K."/>
            <person name="Lin T.-S."/>
            <person name="Morel P."/>
            <person name="Zyprian E.M."/>
            <person name="Steck T.R."/>
            <person name="Kado C.I."/>
        </authorList>
    </citation>
    <scope>NUCLEOTIDE SEQUENCE [GENOMIC DNA]</scope>
</reference>
<reference key="3">
    <citation type="journal article" date="1990" name="Mol. Microbiol.">
        <title>Characterization of the virB operon of an Agrobacterium tumefaciens Ti plasmid: nucleotide sequence and protein analysis.</title>
        <authorList>
            <person name="Shirasu K."/>
            <person name="Morel P."/>
            <person name="Kado C.I."/>
        </authorList>
    </citation>
    <scope>NUCLEOTIDE SEQUENCE [GENOMIC DNA]</scope>
</reference>
<reference key="4">
    <citation type="journal article" date="2001" name="Science">
        <title>The genome of the natural genetic engineer Agrobacterium tumefaciens C58.</title>
        <authorList>
            <person name="Wood D.W."/>
            <person name="Setubal J.C."/>
            <person name="Kaul R."/>
            <person name="Monks D.E."/>
            <person name="Kitajima J.P."/>
            <person name="Okura V.K."/>
            <person name="Zhou Y."/>
            <person name="Chen L."/>
            <person name="Wood G.E."/>
            <person name="Almeida N.F. Jr."/>
            <person name="Woo L."/>
            <person name="Chen Y."/>
            <person name="Paulsen I.T."/>
            <person name="Eisen J.A."/>
            <person name="Karp P.D."/>
            <person name="Bovee D. Sr."/>
            <person name="Chapman P."/>
            <person name="Clendenning J."/>
            <person name="Deatherage G."/>
            <person name="Gillet W."/>
            <person name="Grant C."/>
            <person name="Kutyavin T."/>
            <person name="Levy R."/>
            <person name="Li M.-J."/>
            <person name="McClelland E."/>
            <person name="Palmieri A."/>
            <person name="Raymond C."/>
            <person name="Rouse G."/>
            <person name="Saenphimmachak C."/>
            <person name="Wu Z."/>
            <person name="Romero P."/>
            <person name="Gordon D."/>
            <person name="Zhang S."/>
            <person name="Yoo H."/>
            <person name="Tao Y."/>
            <person name="Biddle P."/>
            <person name="Jung M."/>
            <person name="Krespan W."/>
            <person name="Perry M."/>
            <person name="Gordon-Kamm B."/>
            <person name="Liao L."/>
            <person name="Kim S."/>
            <person name="Hendrick C."/>
            <person name="Zhao Z.-Y."/>
            <person name="Dolan M."/>
            <person name="Chumley F."/>
            <person name="Tingey S.V."/>
            <person name="Tomb J.-F."/>
            <person name="Gordon M.P."/>
            <person name="Olson M.V."/>
            <person name="Nester E.W."/>
        </authorList>
    </citation>
    <scope>NUCLEOTIDE SEQUENCE [LARGE SCALE GENOMIC DNA]</scope>
</reference>
<reference key="5">
    <citation type="journal article" date="2001" name="Science">
        <title>Genome sequence of the plant pathogen and biotechnology agent Agrobacterium tumefaciens C58.</title>
        <authorList>
            <person name="Goodner B."/>
            <person name="Hinkle G."/>
            <person name="Gattung S."/>
            <person name="Miller N."/>
            <person name="Blanchard M."/>
            <person name="Qurollo B."/>
            <person name="Goldman B.S."/>
            <person name="Cao Y."/>
            <person name="Askenazi M."/>
            <person name="Halling C."/>
            <person name="Mullin L."/>
            <person name="Houmiel K."/>
            <person name="Gordon J."/>
            <person name="Vaudin M."/>
            <person name="Iartchouk O."/>
            <person name="Epp A."/>
            <person name="Liu F."/>
            <person name="Wollam C."/>
            <person name="Allinger M."/>
            <person name="Doughty D."/>
            <person name="Scott C."/>
            <person name="Lappas C."/>
            <person name="Markelz B."/>
            <person name="Flanagan C."/>
            <person name="Crowell C."/>
            <person name="Gurson J."/>
            <person name="Lomo C."/>
            <person name="Sear C."/>
            <person name="Strub G."/>
            <person name="Cielo C."/>
            <person name="Slater S."/>
        </authorList>
    </citation>
    <scope>NUCLEOTIDE SEQUENCE [LARGE SCALE GENOMIC DNA]</scope>
    <source>
        <strain>C58 / ATCC 33970</strain>
    </source>
</reference>
<reference key="6">
    <citation type="journal article" date="2006" name="Proc. Natl. Acad. Sci. U.S.A.">
        <title>Agrobacterium tumefaciens VirB8 structure reveals potential protein-protein interaction sites.</title>
        <authorList>
            <person name="Bailey S."/>
            <person name="Ward D."/>
            <person name="Middleton R."/>
            <person name="Grossmann J.G."/>
            <person name="Zambryski P.C."/>
        </authorList>
    </citation>
    <scope>X-RAY CRYSTALLOGRAPHY (2.2 ANGSTROMS) OF 92-237</scope>
    <scope>SUBUNIT</scope>
</reference>
<keyword id="KW-0002">3D-structure</keyword>
<keyword id="KW-0997">Cell inner membrane</keyword>
<keyword id="KW-1003">Cell membrane</keyword>
<keyword id="KW-0192">Crown gall tumor</keyword>
<keyword id="KW-0472">Membrane</keyword>
<keyword id="KW-0614">Plasmid</keyword>
<keyword id="KW-1185">Reference proteome</keyword>
<keyword id="KW-0812">Transmembrane</keyword>
<keyword id="KW-1133">Transmembrane helix</keyword>
<feature type="chain" id="PRO_0000065843" description="Protein virB8">
    <location>
        <begin position="1"/>
        <end position="237"/>
    </location>
</feature>
<feature type="topological domain" description="Cytoplasmic" evidence="1">
    <location>
        <begin position="1"/>
        <end position="38"/>
    </location>
</feature>
<feature type="transmembrane region" description="Helical" evidence="1">
    <location>
        <begin position="39"/>
        <end position="61"/>
    </location>
</feature>
<feature type="topological domain" description="Periplasmic" evidence="1">
    <location>
        <begin position="62"/>
        <end position="237"/>
    </location>
</feature>
<feature type="sequence conflict" description="In Ref. 1; CAA37361." evidence="3" ref="1">
    <location>
        <begin position="21"/>
        <end position="22"/>
    </location>
</feature>
<feature type="sequence conflict" description="In Ref. 2 and 3." evidence="3" ref="2 3">
    <original>SA</original>
    <variation>TR</variation>
    <location>
        <begin position="128"/>
        <end position="129"/>
    </location>
</feature>
<feature type="helix" evidence="4">
    <location>
        <begin position="93"/>
        <end position="110"/>
    </location>
</feature>
<feature type="turn" evidence="4">
    <location>
        <begin position="114"/>
        <end position="116"/>
    </location>
</feature>
<feature type="helix" evidence="4">
    <location>
        <begin position="117"/>
        <end position="126"/>
    </location>
</feature>
<feature type="helix" evidence="4">
    <location>
        <begin position="130"/>
        <end position="140"/>
    </location>
</feature>
<feature type="helix" evidence="4">
    <location>
        <begin position="148"/>
        <end position="151"/>
    </location>
</feature>
<feature type="turn" evidence="4">
    <location>
        <begin position="152"/>
        <end position="154"/>
    </location>
</feature>
<feature type="strand" evidence="4">
    <location>
        <begin position="155"/>
        <end position="169"/>
    </location>
</feature>
<feature type="strand" evidence="4">
    <location>
        <begin position="172"/>
        <end position="183"/>
    </location>
</feature>
<feature type="strand" evidence="4">
    <location>
        <begin position="189"/>
        <end position="201"/>
    </location>
</feature>
<feature type="helix" evidence="4">
    <location>
        <begin position="207"/>
        <end position="210"/>
    </location>
</feature>
<feature type="strand" evidence="4">
    <location>
        <begin position="217"/>
        <end position="226"/>
    </location>
</feature>
<evidence type="ECO:0000255" key="1"/>
<evidence type="ECO:0000269" key="2">
    <source>
    </source>
</evidence>
<evidence type="ECO:0000305" key="3"/>
<evidence type="ECO:0007829" key="4">
    <source>
        <dbReference type="PDB" id="2CC3"/>
    </source>
</evidence>
<protein>
    <recommendedName>
        <fullName>Protein virB8</fullName>
    </recommendedName>
</protein>
<accession>P17798</accession>
<dbReference type="EMBL" id="X53264">
    <property type="protein sequence ID" value="CAA37361.1"/>
    <property type="molecule type" value="Genomic_DNA"/>
</dbReference>
<dbReference type="EMBL" id="J03320">
    <property type="protein sequence ID" value="AAA91598.1"/>
    <property type="molecule type" value="Genomic_DNA"/>
</dbReference>
<dbReference type="EMBL" id="AE007871">
    <property type="protein sequence ID" value="AAK90936.2"/>
    <property type="molecule type" value="Genomic_DNA"/>
</dbReference>
<dbReference type="PIR" id="AD3249">
    <property type="entry name" value="AD3249"/>
</dbReference>
<dbReference type="PIR" id="S12348">
    <property type="entry name" value="B8AG58"/>
</dbReference>
<dbReference type="RefSeq" id="NP_396495.2">
    <property type="nucleotide sequence ID" value="NC_003065.3"/>
</dbReference>
<dbReference type="RefSeq" id="WP_010891496.1">
    <property type="nucleotide sequence ID" value="NC_003065.3"/>
</dbReference>
<dbReference type="PDB" id="2CC3">
    <property type="method" value="X-ray"/>
    <property type="resolution" value="2.20 A"/>
    <property type="chains" value="A/B=92-237"/>
</dbReference>
<dbReference type="PDBsum" id="2CC3"/>
<dbReference type="SMR" id="P17798"/>
<dbReference type="DIP" id="DIP-45215N"/>
<dbReference type="IntAct" id="P17798">
    <property type="interactions" value="2"/>
</dbReference>
<dbReference type="MINT" id="P17798"/>
<dbReference type="EnsemblBacteria" id="AAK90936">
    <property type="protein sequence ID" value="AAK90936"/>
    <property type="gene ID" value="Atu6174"/>
</dbReference>
<dbReference type="GeneID" id="86882429"/>
<dbReference type="KEGG" id="atu:Atu6174"/>
<dbReference type="PATRIC" id="fig|176299.10.peg.5369"/>
<dbReference type="HOGENOM" id="CLU_068461_1_1_5"/>
<dbReference type="OrthoDB" id="7366154at2"/>
<dbReference type="PhylomeDB" id="P17798"/>
<dbReference type="BioCyc" id="AGRO:ATU6174-MONOMER"/>
<dbReference type="EvolutionaryTrace" id="P17798"/>
<dbReference type="Proteomes" id="UP000000813">
    <property type="component" value="Plasmid Ti"/>
</dbReference>
<dbReference type="GO" id="GO:0005886">
    <property type="term" value="C:plasma membrane"/>
    <property type="evidence" value="ECO:0007669"/>
    <property type="project" value="UniProtKB-SubCell"/>
</dbReference>
<dbReference type="GO" id="GO:0043684">
    <property type="term" value="C:type IV secretion system complex"/>
    <property type="evidence" value="ECO:0000317"/>
    <property type="project" value="PAMGO_GAT"/>
</dbReference>
<dbReference type="GO" id="GO:0042802">
    <property type="term" value="F:identical protein binding"/>
    <property type="evidence" value="ECO:0000353"/>
    <property type="project" value="IntAct"/>
</dbReference>
<dbReference type="GO" id="GO:0030255">
    <property type="term" value="P:protein secretion by the type IV secretion system"/>
    <property type="evidence" value="ECO:0000317"/>
    <property type="project" value="PAMGO_GAT"/>
</dbReference>
<dbReference type="CDD" id="cd16384">
    <property type="entry name" value="VirB8_like"/>
    <property type="match status" value="1"/>
</dbReference>
<dbReference type="Gene3D" id="3.10.450.230">
    <property type="entry name" value="VirB8 protein"/>
    <property type="match status" value="1"/>
</dbReference>
<dbReference type="InterPro" id="IPR032710">
    <property type="entry name" value="NTF2-like_dom_sf"/>
</dbReference>
<dbReference type="InterPro" id="IPR007430">
    <property type="entry name" value="VirB8"/>
</dbReference>
<dbReference type="NCBIfam" id="NF010439">
    <property type="entry name" value="PRK13865.1"/>
    <property type="match status" value="1"/>
</dbReference>
<dbReference type="Pfam" id="PF04335">
    <property type="entry name" value="VirB8"/>
    <property type="match status" value="1"/>
</dbReference>
<dbReference type="SUPFAM" id="SSF54427">
    <property type="entry name" value="NTF2-like"/>
    <property type="match status" value="1"/>
</dbReference>
<geneLocation type="plasmid">
    <name>pTiC58</name>
</geneLocation>
<comment type="function">
    <text>VirB proteins are suggested to act at the bacterial surface and there play an important role in directing T-DNA transfer to plant cells.</text>
</comment>
<comment type="subunit">
    <text evidence="2">Homodimer.</text>
</comment>
<comment type="interaction">
    <interactant intactId="EBI-2012972">
        <id>P17798</id>
    </interactant>
    <interactant intactId="EBI-2013080">
        <id>P17800</id>
        <label>virB10</label>
    </interactant>
    <organismsDiffer>false</organismsDiffer>
    <experiments>5</experiments>
</comment>
<comment type="interaction">
    <interactant intactId="EBI-2012972">
        <id>P17798</id>
    </interactant>
    <interactant intactId="EBI-2012972">
        <id>P17798</id>
        <label>virB8</label>
    </interactant>
    <organismsDiffer>false</organismsDiffer>
    <experiments>6</experiments>
</comment>
<comment type="subcellular location">
    <subcellularLocation>
        <location evidence="3">Cell inner membrane</location>
        <topology evidence="3">Single-pass membrane protein</topology>
    </subcellularLocation>
</comment>
<comment type="similarity">
    <text evidence="3">Belongs to the virB8 family.</text>
</comment>